<sequence length="258" mass="27160">MMNPLIIKLGGVLLDSEEALERLFSALVNYRESHQRPLVIVHGGGCVVDELMKGLNLPVKKKNGLRVTPADQIDIITGALAGTANKTLLAWAKKHQIAAVGLFLGDGDSVKVTQLDEELGHVGLAQPGSPKLINSLLENGYLPVVSSIGVTDEGQLMNVNADQAATALAATLGADLILLSDVSGILDGKGQRIAEMTAAKAEQLIEQGIITDGMIVKVNAALDAARTLGRPVDIASWRHAEQLPALFNGMPMGTRILA</sequence>
<organism>
    <name type="scientific">Escherichia coli O157:H7</name>
    <dbReference type="NCBI Taxonomy" id="83334"/>
    <lineage>
        <taxon>Bacteria</taxon>
        <taxon>Pseudomonadati</taxon>
        <taxon>Pseudomonadota</taxon>
        <taxon>Gammaproteobacteria</taxon>
        <taxon>Enterobacterales</taxon>
        <taxon>Enterobacteriaceae</taxon>
        <taxon>Escherichia</taxon>
    </lineage>
</organism>
<evidence type="ECO:0000250" key="1">
    <source>
        <dbReference type="UniProtKB" id="P0A6C8"/>
    </source>
</evidence>
<evidence type="ECO:0000255" key="2">
    <source>
        <dbReference type="HAMAP-Rule" id="MF_00082"/>
    </source>
</evidence>
<evidence type="ECO:0000305" key="3"/>
<accession>P0A6C9</accession>
<accession>P11445</accession>
<gene>
    <name evidence="2" type="primary">argB</name>
    <name type="ordered locus">Z5517</name>
    <name type="ordered locus">ECs4888</name>
</gene>
<proteinExistence type="inferred from homology"/>
<reference key="1">
    <citation type="journal article" date="2001" name="Nature">
        <title>Genome sequence of enterohaemorrhagic Escherichia coli O157:H7.</title>
        <authorList>
            <person name="Perna N.T."/>
            <person name="Plunkett G. III"/>
            <person name="Burland V."/>
            <person name="Mau B."/>
            <person name="Glasner J.D."/>
            <person name="Rose D.J."/>
            <person name="Mayhew G.F."/>
            <person name="Evans P.S."/>
            <person name="Gregor J."/>
            <person name="Kirkpatrick H.A."/>
            <person name="Posfai G."/>
            <person name="Hackett J."/>
            <person name="Klink S."/>
            <person name="Boutin A."/>
            <person name="Shao Y."/>
            <person name="Miller L."/>
            <person name="Grotbeck E.J."/>
            <person name="Davis N.W."/>
            <person name="Lim A."/>
            <person name="Dimalanta E.T."/>
            <person name="Potamousis K."/>
            <person name="Apodaca J."/>
            <person name="Anantharaman T.S."/>
            <person name="Lin J."/>
            <person name="Yen G."/>
            <person name="Schwartz D.C."/>
            <person name="Welch R.A."/>
            <person name="Blattner F.R."/>
        </authorList>
    </citation>
    <scope>NUCLEOTIDE SEQUENCE [LARGE SCALE GENOMIC DNA]</scope>
    <source>
        <strain>O157:H7 / EDL933 / ATCC 700927 / EHEC</strain>
    </source>
</reference>
<reference key="2">
    <citation type="journal article" date="2001" name="DNA Res.">
        <title>Complete genome sequence of enterohemorrhagic Escherichia coli O157:H7 and genomic comparison with a laboratory strain K-12.</title>
        <authorList>
            <person name="Hayashi T."/>
            <person name="Makino K."/>
            <person name="Ohnishi M."/>
            <person name="Kurokawa K."/>
            <person name="Ishii K."/>
            <person name="Yokoyama K."/>
            <person name="Han C.-G."/>
            <person name="Ohtsubo E."/>
            <person name="Nakayama K."/>
            <person name="Murata T."/>
            <person name="Tanaka M."/>
            <person name="Tobe T."/>
            <person name="Iida T."/>
            <person name="Takami H."/>
            <person name="Honda T."/>
            <person name="Sasakawa C."/>
            <person name="Ogasawara N."/>
            <person name="Yasunaga T."/>
            <person name="Kuhara S."/>
            <person name="Shiba T."/>
            <person name="Hattori M."/>
            <person name="Shinagawa H."/>
        </authorList>
    </citation>
    <scope>NUCLEOTIDE SEQUENCE [LARGE SCALE GENOMIC DNA]</scope>
    <source>
        <strain>O157:H7 / Sakai / RIMD 0509952 / EHEC</strain>
    </source>
</reference>
<comment type="function">
    <text evidence="2">Catalyzes the ATP-dependent phosphorylation of N-acetyl-L-glutamate.</text>
</comment>
<comment type="catalytic activity">
    <reaction evidence="2">
        <text>N-acetyl-L-glutamate + ATP = N-acetyl-L-glutamyl 5-phosphate + ADP</text>
        <dbReference type="Rhea" id="RHEA:14629"/>
        <dbReference type="ChEBI" id="CHEBI:30616"/>
        <dbReference type="ChEBI" id="CHEBI:44337"/>
        <dbReference type="ChEBI" id="CHEBI:57936"/>
        <dbReference type="ChEBI" id="CHEBI:456216"/>
        <dbReference type="EC" id="2.7.2.8"/>
    </reaction>
</comment>
<comment type="pathway">
    <text evidence="2">Amino-acid biosynthesis; L-arginine biosynthesis; N(2)-acetyl-L-ornithine from L-glutamate: step 2/4.</text>
</comment>
<comment type="subunit">
    <text evidence="2">Homodimer.</text>
</comment>
<comment type="subcellular location">
    <subcellularLocation>
        <location evidence="2">Cytoplasm</location>
    </subcellularLocation>
</comment>
<comment type="similarity">
    <text evidence="2">Belongs to the acetylglutamate kinase family. ArgB subfamily.</text>
</comment>
<comment type="sequence caution" evidence="3">
    <conflict type="erroneous initiation">
        <sequence resource="EMBL-CDS" id="BAB38311"/>
    </conflict>
    <text>Truncated N-terminus.</text>
</comment>
<dbReference type="EC" id="2.7.2.8" evidence="2"/>
<dbReference type="EMBL" id="AE005174">
    <property type="protein sequence ID" value="AAG59161.1"/>
    <property type="molecule type" value="Genomic_DNA"/>
</dbReference>
<dbReference type="EMBL" id="BA000007">
    <property type="protein sequence ID" value="BAB38311.2"/>
    <property type="status" value="ALT_INIT"/>
    <property type="molecule type" value="Genomic_DNA"/>
</dbReference>
<dbReference type="PIR" id="E86087">
    <property type="entry name" value="E86087"/>
</dbReference>
<dbReference type="PIR" id="H91239">
    <property type="entry name" value="H91239"/>
</dbReference>
<dbReference type="RefSeq" id="NP_312915.2">
    <property type="nucleotide sequence ID" value="NC_002695.1"/>
</dbReference>
<dbReference type="RefSeq" id="WP_001302318.1">
    <property type="nucleotide sequence ID" value="NZ_VOAI01000032.1"/>
</dbReference>
<dbReference type="SMR" id="P0A6C9"/>
<dbReference type="STRING" id="155864.Z5517"/>
<dbReference type="GeneID" id="75203211"/>
<dbReference type="GeneID" id="914992"/>
<dbReference type="KEGG" id="ece:Z5517"/>
<dbReference type="KEGG" id="ecs:ECs_4888"/>
<dbReference type="PATRIC" id="fig|386585.9.peg.5112"/>
<dbReference type="eggNOG" id="COG0548">
    <property type="taxonomic scope" value="Bacteria"/>
</dbReference>
<dbReference type="HOGENOM" id="CLU_053680_1_1_6"/>
<dbReference type="OMA" id="EGLYEDW"/>
<dbReference type="UniPathway" id="UPA00068">
    <property type="reaction ID" value="UER00107"/>
</dbReference>
<dbReference type="Proteomes" id="UP000000558">
    <property type="component" value="Chromosome"/>
</dbReference>
<dbReference type="Proteomes" id="UP000002519">
    <property type="component" value="Chromosome"/>
</dbReference>
<dbReference type="GO" id="GO:0005737">
    <property type="term" value="C:cytoplasm"/>
    <property type="evidence" value="ECO:0007669"/>
    <property type="project" value="UniProtKB-SubCell"/>
</dbReference>
<dbReference type="GO" id="GO:0003991">
    <property type="term" value="F:acetylglutamate kinase activity"/>
    <property type="evidence" value="ECO:0007669"/>
    <property type="project" value="UniProtKB-UniRule"/>
</dbReference>
<dbReference type="GO" id="GO:0005524">
    <property type="term" value="F:ATP binding"/>
    <property type="evidence" value="ECO:0007669"/>
    <property type="project" value="UniProtKB-UniRule"/>
</dbReference>
<dbReference type="GO" id="GO:0042450">
    <property type="term" value="P:arginine biosynthetic process via ornithine"/>
    <property type="evidence" value="ECO:0007669"/>
    <property type="project" value="UniProtKB-UniRule"/>
</dbReference>
<dbReference type="GO" id="GO:0006526">
    <property type="term" value="P:L-arginine biosynthetic process"/>
    <property type="evidence" value="ECO:0007669"/>
    <property type="project" value="UniProtKB-UniPathway"/>
</dbReference>
<dbReference type="CDD" id="cd04249">
    <property type="entry name" value="AAK_NAGK-NC"/>
    <property type="match status" value="1"/>
</dbReference>
<dbReference type="FunFam" id="3.40.1160.10:FF:000008">
    <property type="entry name" value="Acetylglutamate kinase"/>
    <property type="match status" value="1"/>
</dbReference>
<dbReference type="Gene3D" id="3.40.1160.10">
    <property type="entry name" value="Acetylglutamate kinase-like"/>
    <property type="match status" value="1"/>
</dbReference>
<dbReference type="HAMAP" id="MF_00082">
    <property type="entry name" value="ArgB"/>
    <property type="match status" value="1"/>
</dbReference>
<dbReference type="InterPro" id="IPR036393">
    <property type="entry name" value="AceGlu_kinase-like_sf"/>
</dbReference>
<dbReference type="InterPro" id="IPR004662">
    <property type="entry name" value="AcgluKinase_fam"/>
</dbReference>
<dbReference type="InterPro" id="IPR037528">
    <property type="entry name" value="ArgB"/>
</dbReference>
<dbReference type="InterPro" id="IPR001048">
    <property type="entry name" value="Asp/Glu/Uridylate_kinase"/>
</dbReference>
<dbReference type="InterPro" id="IPR041731">
    <property type="entry name" value="NAGK-NC"/>
</dbReference>
<dbReference type="NCBIfam" id="TIGR00761">
    <property type="entry name" value="argB"/>
    <property type="match status" value="1"/>
</dbReference>
<dbReference type="PANTHER" id="PTHR23342">
    <property type="entry name" value="N-ACETYLGLUTAMATE SYNTHASE"/>
    <property type="match status" value="1"/>
</dbReference>
<dbReference type="PANTHER" id="PTHR23342:SF0">
    <property type="entry name" value="N-ACETYLGLUTAMATE SYNTHASE, MITOCHONDRIAL"/>
    <property type="match status" value="1"/>
</dbReference>
<dbReference type="Pfam" id="PF00696">
    <property type="entry name" value="AA_kinase"/>
    <property type="match status" value="1"/>
</dbReference>
<dbReference type="PIRSF" id="PIRSF000728">
    <property type="entry name" value="NAGK"/>
    <property type="match status" value="1"/>
</dbReference>
<dbReference type="SUPFAM" id="SSF53633">
    <property type="entry name" value="Carbamate kinase-like"/>
    <property type="match status" value="1"/>
</dbReference>
<name>ARGB_ECO57</name>
<keyword id="KW-0028">Amino-acid biosynthesis</keyword>
<keyword id="KW-0055">Arginine biosynthesis</keyword>
<keyword id="KW-0067">ATP-binding</keyword>
<keyword id="KW-0963">Cytoplasm</keyword>
<keyword id="KW-0418">Kinase</keyword>
<keyword id="KW-0547">Nucleotide-binding</keyword>
<keyword id="KW-1185">Reference proteome</keyword>
<keyword id="KW-0808">Transferase</keyword>
<protein>
    <recommendedName>
        <fullName evidence="2">Acetylglutamate kinase</fullName>
        <ecNumber evidence="2">2.7.2.8</ecNumber>
    </recommendedName>
    <alternativeName>
        <fullName evidence="2">N-acetyl-L-glutamate 5-phosphotransferase</fullName>
    </alternativeName>
    <alternativeName>
        <fullName evidence="2">NAG kinase</fullName>
        <shortName evidence="2">NAGK</shortName>
    </alternativeName>
</protein>
<feature type="initiator methionine" description="Removed" evidence="1">
    <location>
        <position position="1"/>
    </location>
</feature>
<feature type="chain" id="PRO_0000112615" description="Acetylglutamate kinase">
    <location>
        <begin position="2"/>
        <end position="258"/>
    </location>
</feature>
<feature type="binding site" evidence="2">
    <location>
        <begin position="44"/>
        <end position="45"/>
    </location>
    <ligand>
        <name>substrate</name>
    </ligand>
</feature>
<feature type="binding site" evidence="2">
    <location>
        <position position="66"/>
    </location>
    <ligand>
        <name>substrate</name>
    </ligand>
</feature>
<feature type="binding site" evidence="2">
    <location>
        <position position="158"/>
    </location>
    <ligand>
        <name>substrate</name>
    </ligand>
</feature>
<feature type="binding site" evidence="2">
    <location>
        <begin position="181"/>
        <end position="186"/>
    </location>
    <ligand>
        <name>ATP</name>
        <dbReference type="ChEBI" id="CHEBI:30616"/>
    </ligand>
</feature>
<feature type="binding site" evidence="2">
    <location>
        <begin position="209"/>
        <end position="211"/>
    </location>
    <ligand>
        <name>ATP</name>
        <dbReference type="ChEBI" id="CHEBI:30616"/>
    </ligand>
</feature>
<feature type="site" description="Transition state stabilizer" evidence="2">
    <location>
        <position position="8"/>
    </location>
</feature>
<feature type="site" description="Transition state stabilizer" evidence="2">
    <location>
        <position position="217"/>
    </location>
</feature>